<reference key="1">
    <citation type="journal article" date="2009" name="Science">
        <title>Green evolution and dynamic adaptations revealed by genomes of the marine picoeukaryotes Micromonas.</title>
        <authorList>
            <person name="Worden A.Z."/>
            <person name="Lee J.H."/>
            <person name="Mock T."/>
            <person name="Rouze P."/>
            <person name="Simmons M.P."/>
            <person name="Aerts A.L."/>
            <person name="Allen A.E."/>
            <person name="Cuvelier M.L."/>
            <person name="Derelle E."/>
            <person name="Everett M.V."/>
            <person name="Foulon E."/>
            <person name="Grimwood J."/>
            <person name="Gundlach H."/>
            <person name="Henrissat B."/>
            <person name="Napoli C."/>
            <person name="McDonald S.M."/>
            <person name="Parker M.S."/>
            <person name="Rombauts S."/>
            <person name="Salamov A."/>
            <person name="Von Dassow P."/>
            <person name="Badger J.H."/>
            <person name="Coutinho P.M."/>
            <person name="Demir E."/>
            <person name="Dubchak I."/>
            <person name="Gentemann C."/>
            <person name="Eikrem W."/>
            <person name="Gready J.E."/>
            <person name="John U."/>
            <person name="Lanier W."/>
            <person name="Lindquist E.A."/>
            <person name="Lucas S."/>
            <person name="Mayer K.F."/>
            <person name="Moreau H."/>
            <person name="Not F."/>
            <person name="Otillar R."/>
            <person name="Panaud O."/>
            <person name="Pangilinan J."/>
            <person name="Paulsen I."/>
            <person name="Piegu B."/>
            <person name="Poliakov A."/>
            <person name="Robbens S."/>
            <person name="Schmutz J."/>
            <person name="Toulza E."/>
            <person name="Wyss T."/>
            <person name="Zelensky A."/>
            <person name="Zhou K."/>
            <person name="Armbrust E.V."/>
            <person name="Bhattacharya D."/>
            <person name="Goodenough U.W."/>
            <person name="Van de Peer Y."/>
            <person name="Grigoriev I.V."/>
        </authorList>
    </citation>
    <scope>NUCLEOTIDE SEQUENCE [LARGE SCALE GENOMIC DNA]</scope>
    <source>
        <strain>RCC299 / NOUM17</strain>
    </source>
</reference>
<protein>
    <recommendedName>
        <fullName>Glutamyl-tRNA(Gln) amidotransferase subunit B-2, chloroplastic/mitochondrial</fullName>
        <shortName evidence="1">Glu-AdT subunit B-2</shortName>
        <ecNumber evidence="1">6.3.5.-</ecNumber>
    </recommendedName>
</protein>
<sequence length="529" mass="56028">MLRRALASRSSEAAIISTRVSLPRGSIPPPPTSSSSSSSSSREGRRPRFFSTTTTSAERPVDDDEWETVVGLELHVQIGAKTKLFSGAERLYGAEANANVAPFDAALPGSLPAVNARAVELAARLGFALGADVQSRSSFDRKHYHYPDLPHGYQITQQRSPIALGGSLDVFVRDGVSGTLRVERLQLEMDTGKSSKAKSSTLVDLNRAGSTLVEIVTAPDLRGAEEASAAAETFQKVVRFLGVGDANMEEGSMRVDVNVSHRTRDGAVAGERCEVKNLNSFRSIARAVAHERTRQIALLKRGQRVRRQTRSFDPATGATAVLRDKEALLDYRFAPEPDLPPVVIEPAALRAIKAAVPELPSTAAARLTNTAGLAPKLAQTIASKPSTVAYFDACAEAADAWSTRNGTVTVDKQDVANWVTGVLVGAVKRAGVTHKGGAGGEPLRGLPESAGAARVGELLARVAASTSMDSGALEATCAAVVASMPEQLAAYRGGRTRAMGSFVGEVMKRTKGRADPRRAAEIIKTLVDQ</sequence>
<keyword id="KW-0067">ATP-binding</keyword>
<keyword id="KW-0150">Chloroplast</keyword>
<keyword id="KW-0436">Ligase</keyword>
<keyword id="KW-0496">Mitochondrion</keyword>
<keyword id="KW-0547">Nucleotide-binding</keyword>
<keyword id="KW-0934">Plastid</keyword>
<keyword id="KW-0648">Protein biosynthesis</keyword>
<keyword id="KW-1185">Reference proteome</keyword>
<accession>C1FJ20</accession>
<organism>
    <name type="scientific">Micromonas commoda (strain RCC299 / NOUM17 / CCMP2709)</name>
    <name type="common">Picoplanktonic green alga</name>
    <dbReference type="NCBI Taxonomy" id="296587"/>
    <lineage>
        <taxon>Eukaryota</taxon>
        <taxon>Viridiplantae</taxon>
        <taxon>Chlorophyta</taxon>
        <taxon>Mamiellophyceae</taxon>
        <taxon>Mamiellales</taxon>
        <taxon>Mamiellaceae</taxon>
        <taxon>Micromonas</taxon>
    </lineage>
</organism>
<feature type="chain" id="PRO_0000413228" description="Glutamyl-tRNA(Gln) amidotransferase subunit B-2, chloroplastic/mitochondrial">
    <location>
        <begin position="1"/>
        <end position="529"/>
    </location>
</feature>
<feature type="region of interest" description="Disordered" evidence="2">
    <location>
        <begin position="17"/>
        <end position="61"/>
    </location>
</feature>
<evidence type="ECO:0000255" key="1">
    <source>
        <dbReference type="HAMAP-Rule" id="MF_03147"/>
    </source>
</evidence>
<evidence type="ECO:0000256" key="2">
    <source>
        <dbReference type="SAM" id="MobiDB-lite"/>
    </source>
</evidence>
<comment type="function">
    <text evidence="1">Allows the formation of correctly charged Gln-tRNA(Gln) through the transamidation of misacylated Glu-tRNA(Gln) in chloroplasts and mitochondria. The reaction takes place in the presence of glutamine and ATP through an activated gamma-phospho-Glu-tRNA(Gln).</text>
</comment>
<comment type="catalytic activity">
    <reaction evidence="1">
        <text>L-glutamyl-tRNA(Gln) + L-glutamine + ATP + H2O = L-glutaminyl-tRNA(Gln) + L-glutamate + ADP + phosphate + H(+)</text>
        <dbReference type="Rhea" id="RHEA:17521"/>
        <dbReference type="Rhea" id="RHEA-COMP:9681"/>
        <dbReference type="Rhea" id="RHEA-COMP:9684"/>
        <dbReference type="ChEBI" id="CHEBI:15377"/>
        <dbReference type="ChEBI" id="CHEBI:15378"/>
        <dbReference type="ChEBI" id="CHEBI:29985"/>
        <dbReference type="ChEBI" id="CHEBI:30616"/>
        <dbReference type="ChEBI" id="CHEBI:43474"/>
        <dbReference type="ChEBI" id="CHEBI:58359"/>
        <dbReference type="ChEBI" id="CHEBI:78520"/>
        <dbReference type="ChEBI" id="CHEBI:78521"/>
        <dbReference type="ChEBI" id="CHEBI:456216"/>
    </reaction>
</comment>
<comment type="subunit">
    <text evidence="1">Subunit of the heterotrimeric GatCAB amidotransferase (AdT) complex, composed of A, B and C subunits.</text>
</comment>
<comment type="subcellular location">
    <subcellularLocation>
        <location evidence="1">Mitochondrion</location>
    </subcellularLocation>
    <subcellularLocation>
        <location evidence="1">Plastid</location>
        <location evidence="1">Chloroplast</location>
    </subcellularLocation>
</comment>
<comment type="miscellaneous">
    <text evidence="1">This protein may be expected to contain an N-terminal transit peptide but none has been predicted.</text>
</comment>
<comment type="similarity">
    <text evidence="1">Belongs to the GatB/GatE family. GatB subfamily.</text>
</comment>
<dbReference type="EC" id="6.3.5.-" evidence="1"/>
<dbReference type="EMBL" id="CP001577">
    <property type="protein sequence ID" value="ACO70513.1"/>
    <property type="molecule type" value="Genomic_DNA"/>
</dbReference>
<dbReference type="RefSeq" id="XP_002509255.1">
    <property type="nucleotide sequence ID" value="XM_002509209.1"/>
</dbReference>
<dbReference type="SMR" id="C1FJ20"/>
<dbReference type="STRING" id="296587.C1FJ20"/>
<dbReference type="GeneID" id="8248140"/>
<dbReference type="KEGG" id="mis:MICPUN_87214"/>
<dbReference type="eggNOG" id="KOG2438">
    <property type="taxonomic scope" value="Eukaryota"/>
</dbReference>
<dbReference type="InParanoid" id="C1FJ20"/>
<dbReference type="OMA" id="VGDANME"/>
<dbReference type="OrthoDB" id="495931at2759"/>
<dbReference type="Proteomes" id="UP000002009">
    <property type="component" value="Chromosome 12"/>
</dbReference>
<dbReference type="GO" id="GO:0009507">
    <property type="term" value="C:chloroplast"/>
    <property type="evidence" value="ECO:0007669"/>
    <property type="project" value="UniProtKB-SubCell"/>
</dbReference>
<dbReference type="GO" id="GO:0030956">
    <property type="term" value="C:glutamyl-tRNA(Gln) amidotransferase complex"/>
    <property type="evidence" value="ECO:0007669"/>
    <property type="project" value="UniProtKB-UniRule"/>
</dbReference>
<dbReference type="GO" id="GO:0005739">
    <property type="term" value="C:mitochondrion"/>
    <property type="evidence" value="ECO:0007669"/>
    <property type="project" value="UniProtKB-SubCell"/>
</dbReference>
<dbReference type="GO" id="GO:0005524">
    <property type="term" value="F:ATP binding"/>
    <property type="evidence" value="ECO:0007669"/>
    <property type="project" value="UniProtKB-KW"/>
</dbReference>
<dbReference type="GO" id="GO:0050567">
    <property type="term" value="F:glutaminyl-tRNA synthase (glutamine-hydrolyzing) activity"/>
    <property type="evidence" value="ECO:0007669"/>
    <property type="project" value="UniProtKB-UniRule"/>
</dbReference>
<dbReference type="GO" id="GO:0070681">
    <property type="term" value="P:glutaminyl-tRNAGln biosynthesis via transamidation"/>
    <property type="evidence" value="ECO:0007669"/>
    <property type="project" value="UniProtKB-UniRule"/>
</dbReference>
<dbReference type="GO" id="GO:0032543">
    <property type="term" value="P:mitochondrial translation"/>
    <property type="evidence" value="ECO:0007669"/>
    <property type="project" value="UniProtKB-UniRule"/>
</dbReference>
<dbReference type="FunFam" id="1.10.10.410:FF:000001">
    <property type="entry name" value="Aspartyl/glutamyl-tRNA(Asn/Gln) amidotransferase subunit B"/>
    <property type="match status" value="1"/>
</dbReference>
<dbReference type="Gene3D" id="1.10.10.410">
    <property type="match status" value="1"/>
</dbReference>
<dbReference type="HAMAP" id="MF_00121">
    <property type="entry name" value="GatB"/>
    <property type="match status" value="1"/>
</dbReference>
<dbReference type="InterPro" id="IPR017959">
    <property type="entry name" value="Asn/Gln-tRNA_amidoTrfase_suB/E"/>
</dbReference>
<dbReference type="InterPro" id="IPR006075">
    <property type="entry name" value="Asn/Gln-tRNA_Trfase_suB/E_cat"/>
</dbReference>
<dbReference type="InterPro" id="IPR018027">
    <property type="entry name" value="Asn/Gln_amidotransferase"/>
</dbReference>
<dbReference type="InterPro" id="IPR003789">
    <property type="entry name" value="Asn/Gln_tRNA_amidoTrase-B-like"/>
</dbReference>
<dbReference type="InterPro" id="IPR004413">
    <property type="entry name" value="GatB"/>
</dbReference>
<dbReference type="InterPro" id="IPR023168">
    <property type="entry name" value="GatB_Yqey_C_2"/>
</dbReference>
<dbReference type="InterPro" id="IPR014746">
    <property type="entry name" value="Gln_synth/guanido_kin_cat_dom"/>
</dbReference>
<dbReference type="NCBIfam" id="TIGR00133">
    <property type="entry name" value="gatB"/>
    <property type="match status" value="1"/>
</dbReference>
<dbReference type="NCBIfam" id="NF004012">
    <property type="entry name" value="PRK05477.1-2"/>
    <property type="match status" value="1"/>
</dbReference>
<dbReference type="PANTHER" id="PTHR11659">
    <property type="entry name" value="GLUTAMYL-TRNA GLN AMIDOTRANSFERASE SUBUNIT B MITOCHONDRIAL AND PROKARYOTIC PET112-RELATED"/>
    <property type="match status" value="1"/>
</dbReference>
<dbReference type="PANTHER" id="PTHR11659:SF0">
    <property type="entry name" value="GLUTAMYL-TRNA(GLN) AMIDOTRANSFERASE SUBUNIT B, MITOCHONDRIAL"/>
    <property type="match status" value="1"/>
</dbReference>
<dbReference type="Pfam" id="PF02934">
    <property type="entry name" value="GatB_N"/>
    <property type="match status" value="1"/>
</dbReference>
<dbReference type="Pfam" id="PF02637">
    <property type="entry name" value="GatB_Yqey"/>
    <property type="match status" value="1"/>
</dbReference>
<dbReference type="SMART" id="SM00845">
    <property type="entry name" value="GatB_Yqey"/>
    <property type="match status" value="1"/>
</dbReference>
<dbReference type="SUPFAM" id="SSF89095">
    <property type="entry name" value="GatB/YqeY motif"/>
    <property type="match status" value="1"/>
</dbReference>
<dbReference type="SUPFAM" id="SSF55931">
    <property type="entry name" value="Glutamine synthetase/guanido kinase"/>
    <property type="match status" value="1"/>
</dbReference>
<name>GATB2_MICCC</name>
<proteinExistence type="inferred from homology"/>
<gene>
    <name evidence="1" type="primary">GATB-2</name>
    <name type="ORF">MICPUN_87214</name>
</gene>